<reference key="1">
    <citation type="journal article" date="2002" name="Proc. Natl. Acad. Sci. U.S.A.">
        <title>BORIS, a novel male germ-line-specific protein associated with epigenetic reprogramming events, shares the same 11-zinc-finger domain with CTCF, the insulator protein involved in reading imprinting marks in the soma.</title>
        <authorList>
            <person name="Loukinov D.I."/>
            <person name="Pugacheva E."/>
            <person name="Vatolin S."/>
            <person name="Pack S.D."/>
            <person name="Moon H."/>
            <person name="Chernukhin I."/>
            <person name="Mannan P."/>
            <person name="Larsson E."/>
            <person name="Kanduri C."/>
            <person name="Vostrov A.A."/>
            <person name="Cui H."/>
            <person name="Niemitz E.L."/>
            <person name="Rasko J.E.J."/>
            <person name="Docquier F.M."/>
            <person name="Kistler M."/>
            <person name="Breen J.J."/>
            <person name="Zhuang Z."/>
            <person name="Quitschke W.W."/>
            <person name="Renkawitz R."/>
            <person name="Klenova E.M."/>
            <person name="Feinberg A.P."/>
            <person name="Ohlsson R."/>
            <person name="Morse H.C. III"/>
            <person name="Lobanenkov V.V."/>
        </authorList>
    </citation>
    <scope>NUCLEOTIDE SEQUENCE [MRNA] (ISOFORM 1)</scope>
    <source>
        <tissue>Testis</tissue>
    </source>
</reference>
<reference key="2">
    <citation type="journal article" date="2009" name="PLoS Biol.">
        <title>Lineage-specific biology revealed by a finished genome assembly of the mouse.</title>
        <authorList>
            <person name="Church D.M."/>
            <person name="Goodstadt L."/>
            <person name="Hillier L.W."/>
            <person name="Zody M.C."/>
            <person name="Goldstein S."/>
            <person name="She X."/>
            <person name="Bult C.J."/>
            <person name="Agarwala R."/>
            <person name="Cherry J.L."/>
            <person name="DiCuccio M."/>
            <person name="Hlavina W."/>
            <person name="Kapustin Y."/>
            <person name="Meric P."/>
            <person name="Maglott D."/>
            <person name="Birtle Z."/>
            <person name="Marques A.C."/>
            <person name="Graves T."/>
            <person name="Zhou S."/>
            <person name="Teague B."/>
            <person name="Potamousis K."/>
            <person name="Churas C."/>
            <person name="Place M."/>
            <person name="Herschleb J."/>
            <person name="Runnheim R."/>
            <person name="Forrest D."/>
            <person name="Amos-Landgraf J."/>
            <person name="Schwartz D.C."/>
            <person name="Cheng Z."/>
            <person name="Lindblad-Toh K."/>
            <person name="Eichler E.E."/>
            <person name="Ponting C.P."/>
        </authorList>
    </citation>
    <scope>NUCLEOTIDE SEQUENCE [LARGE SCALE GENOMIC DNA]</scope>
    <source>
        <strain>C57BL/6J</strain>
    </source>
</reference>
<reference key="3">
    <citation type="journal article" date="2004" name="Genome Res.">
        <title>The status, quality, and expansion of the NIH full-length cDNA project: the Mammalian Gene Collection (MGC).</title>
        <authorList>
            <consortium name="The MGC Project Team"/>
        </authorList>
    </citation>
    <scope>NUCLEOTIDE SEQUENCE [LARGE SCALE MRNA] (ISOFORM 2)</scope>
    <source>
        <tissue>Brain</tissue>
    </source>
</reference>
<reference key="4">
    <citation type="journal article" date="2006" name="PLoS Biol.">
        <title>The testis-specific factor CTCFL cooperates with the protein methyltransferase PRMT7 in H19 imprinting control region methylation.</title>
        <authorList>
            <person name="Jelinic P."/>
            <person name="Stehle J.-C."/>
            <person name="Shaw P."/>
        </authorList>
    </citation>
    <scope>FUNCTION</scope>
    <scope>SUBCELLULAR LOCATION</scope>
    <scope>TISSUE SPECIFICITY</scope>
    <scope>DEVELOPMENTAL STAGE</scope>
    <scope>DNA-BINDING</scope>
    <scope>INTERACTION WITH HISTONE AND PRMT7</scope>
</reference>
<dbReference type="EMBL" id="DQ153171">
    <property type="protein sequence ID" value="AAZ79234.1"/>
    <property type="molecule type" value="mRNA"/>
</dbReference>
<dbReference type="EMBL" id="AL837509">
    <property type="status" value="NOT_ANNOTATED_CDS"/>
    <property type="molecule type" value="Genomic_DNA"/>
</dbReference>
<dbReference type="EMBL" id="AL928599">
    <property type="status" value="NOT_ANNOTATED_CDS"/>
    <property type="molecule type" value="Genomic_DNA"/>
</dbReference>
<dbReference type="EMBL" id="BC151026">
    <property type="protein sequence ID" value="AAI51027.1"/>
    <property type="molecule type" value="mRNA"/>
</dbReference>
<dbReference type="CCDS" id="CCDS38349.1">
    <molecule id="A2APF3-1"/>
</dbReference>
<dbReference type="RefSeq" id="NP_001074856.1">
    <molecule id="A2APF3-1"/>
    <property type="nucleotide sequence ID" value="NM_001081387.2"/>
</dbReference>
<dbReference type="RefSeq" id="NP_001342114.1">
    <molecule id="A2APF3-2"/>
    <property type="nucleotide sequence ID" value="NM_001355185.1"/>
</dbReference>
<dbReference type="RefSeq" id="XP_017174657.1">
    <property type="nucleotide sequence ID" value="XM_017319168.1"/>
</dbReference>
<dbReference type="SMR" id="A2APF3"/>
<dbReference type="BioGRID" id="576678">
    <property type="interactions" value="26"/>
</dbReference>
<dbReference type="DIP" id="DIP-29209N"/>
<dbReference type="FunCoup" id="A2APF3">
    <property type="interactions" value="1168"/>
</dbReference>
<dbReference type="IntAct" id="A2APF3">
    <property type="interactions" value="5"/>
</dbReference>
<dbReference type="STRING" id="10090.ENSMUSP00000091845"/>
<dbReference type="iPTMnet" id="A2APF3"/>
<dbReference type="PhosphoSitePlus" id="A2APF3"/>
<dbReference type="PaxDb" id="10090-ENSMUSP00000091845"/>
<dbReference type="PeptideAtlas" id="A2APF3"/>
<dbReference type="ProteomicsDB" id="277914">
    <molecule id="A2APF3-1"/>
</dbReference>
<dbReference type="ProteomicsDB" id="277915">
    <molecule id="A2APF3-2"/>
</dbReference>
<dbReference type="Antibodypedia" id="744">
    <property type="antibodies" value="266 antibodies from 33 providers"/>
</dbReference>
<dbReference type="DNASU" id="664799"/>
<dbReference type="Ensembl" id="ENSMUST00000094287.10">
    <molecule id="A2APF3-1"/>
    <property type="protein sequence ID" value="ENSMUSP00000091845.4"/>
    <property type="gene ID" value="ENSMUSG00000070495.13"/>
</dbReference>
<dbReference type="GeneID" id="664799"/>
<dbReference type="KEGG" id="mmu:664799"/>
<dbReference type="UCSC" id="uc008odi.1">
    <molecule id="A2APF3-1"/>
    <property type="organism name" value="mouse"/>
</dbReference>
<dbReference type="UCSC" id="uc012cks.1">
    <molecule id="A2APF3-2"/>
    <property type="organism name" value="mouse"/>
</dbReference>
<dbReference type="AGR" id="MGI:3652571"/>
<dbReference type="CTD" id="140690"/>
<dbReference type="MGI" id="MGI:3652571">
    <property type="gene designation" value="Ctcfl"/>
</dbReference>
<dbReference type="VEuPathDB" id="HostDB:ENSMUSG00000070495"/>
<dbReference type="eggNOG" id="KOG1721">
    <property type="taxonomic scope" value="Eukaryota"/>
</dbReference>
<dbReference type="GeneTree" id="ENSGT00940000161524"/>
<dbReference type="HOGENOM" id="CLU_002678_77_1_1"/>
<dbReference type="InParanoid" id="A2APF3"/>
<dbReference type="OMA" id="LTCEMIF"/>
<dbReference type="OrthoDB" id="6077919at2759"/>
<dbReference type="PhylomeDB" id="A2APF3"/>
<dbReference type="TreeFam" id="TF106430"/>
<dbReference type="BioGRID-ORCS" id="664799">
    <property type="hits" value="2 hits in 81 CRISPR screens"/>
</dbReference>
<dbReference type="PRO" id="PR:A2APF3"/>
<dbReference type="Proteomes" id="UP000000589">
    <property type="component" value="Chromosome 2"/>
</dbReference>
<dbReference type="RNAct" id="A2APF3">
    <property type="molecule type" value="protein"/>
</dbReference>
<dbReference type="Bgee" id="ENSMUSG00000070495">
    <property type="expression patterns" value="Expressed in dorsal root ganglion and 30 other cell types or tissues"/>
</dbReference>
<dbReference type="GO" id="GO:0005737">
    <property type="term" value="C:cytoplasm"/>
    <property type="evidence" value="ECO:0000314"/>
    <property type="project" value="MGI"/>
</dbReference>
<dbReference type="GO" id="GO:0005829">
    <property type="term" value="C:cytosol"/>
    <property type="evidence" value="ECO:0007669"/>
    <property type="project" value="Ensembl"/>
</dbReference>
<dbReference type="GO" id="GO:0016604">
    <property type="term" value="C:nuclear body"/>
    <property type="evidence" value="ECO:0007669"/>
    <property type="project" value="Ensembl"/>
</dbReference>
<dbReference type="GO" id="GO:0005634">
    <property type="term" value="C:nucleus"/>
    <property type="evidence" value="ECO:0000314"/>
    <property type="project" value="UniProtKB"/>
</dbReference>
<dbReference type="GO" id="GO:0001228">
    <property type="term" value="F:DNA-binding transcription activator activity, RNA polymerase II-specific"/>
    <property type="evidence" value="ECO:0007669"/>
    <property type="project" value="Ensembl"/>
</dbReference>
<dbReference type="GO" id="GO:0042393">
    <property type="term" value="F:histone binding"/>
    <property type="evidence" value="ECO:0000314"/>
    <property type="project" value="UniProtKB"/>
</dbReference>
<dbReference type="GO" id="GO:0000978">
    <property type="term" value="F:RNA polymerase II cis-regulatory region sequence-specific DNA binding"/>
    <property type="evidence" value="ECO:0007669"/>
    <property type="project" value="Ensembl"/>
</dbReference>
<dbReference type="GO" id="GO:0043565">
    <property type="term" value="F:sequence-specific DNA binding"/>
    <property type="evidence" value="ECO:0000314"/>
    <property type="project" value="UniProtKB"/>
</dbReference>
<dbReference type="GO" id="GO:0008270">
    <property type="term" value="F:zinc ion binding"/>
    <property type="evidence" value="ECO:0007669"/>
    <property type="project" value="UniProtKB-KW"/>
</dbReference>
<dbReference type="GO" id="GO:0071169">
    <property type="term" value="P:establishment of protein localization to chromatin"/>
    <property type="evidence" value="ECO:0007669"/>
    <property type="project" value="Ensembl"/>
</dbReference>
<dbReference type="GO" id="GO:0071514">
    <property type="term" value="P:genomic imprinting"/>
    <property type="evidence" value="ECO:0000314"/>
    <property type="project" value="UniProtKB"/>
</dbReference>
<dbReference type="GO" id="GO:0045815">
    <property type="term" value="P:transcription initiation-coupled chromatin remodeling"/>
    <property type="evidence" value="ECO:0007669"/>
    <property type="project" value="Ensembl"/>
</dbReference>
<dbReference type="FunFam" id="3.30.160.60:FF:000802">
    <property type="entry name" value="CCCTC-binding factor like"/>
    <property type="match status" value="1"/>
</dbReference>
<dbReference type="FunFam" id="3.30.160.60:FF:000222">
    <property type="entry name" value="Putative transcriptional repressor ctcf"/>
    <property type="match status" value="1"/>
</dbReference>
<dbReference type="FunFam" id="3.30.160.60:FF:000373">
    <property type="entry name" value="Putative transcriptional repressor ctcf"/>
    <property type="match status" value="1"/>
</dbReference>
<dbReference type="FunFam" id="3.30.160.60:FF:000420">
    <property type="entry name" value="Putative transcriptional repressor ctcf"/>
    <property type="match status" value="1"/>
</dbReference>
<dbReference type="FunFam" id="3.30.160.60:FF:000049">
    <property type="entry name" value="transcriptional repressor CTCF isoform X1"/>
    <property type="match status" value="2"/>
</dbReference>
<dbReference type="FunFam" id="3.30.160.60:FF:000446">
    <property type="entry name" value="Zinc finger protein"/>
    <property type="match status" value="1"/>
</dbReference>
<dbReference type="Gene3D" id="3.30.160.60">
    <property type="entry name" value="Classic Zinc Finger"/>
    <property type="match status" value="8"/>
</dbReference>
<dbReference type="InterPro" id="IPR056438">
    <property type="entry name" value="Znf-C2H2_CTCF"/>
</dbReference>
<dbReference type="InterPro" id="IPR036236">
    <property type="entry name" value="Znf_C2H2_sf"/>
</dbReference>
<dbReference type="InterPro" id="IPR013087">
    <property type="entry name" value="Znf_C2H2_type"/>
</dbReference>
<dbReference type="PANTHER" id="PTHR24379:SF81">
    <property type="entry name" value="CCCTC-BINDING FACTOR LIKE"/>
    <property type="match status" value="1"/>
</dbReference>
<dbReference type="PANTHER" id="PTHR24379">
    <property type="entry name" value="KRAB AND ZINC FINGER DOMAIN-CONTAINING"/>
    <property type="match status" value="1"/>
</dbReference>
<dbReference type="Pfam" id="PF00096">
    <property type="entry name" value="zf-C2H2"/>
    <property type="match status" value="4"/>
</dbReference>
<dbReference type="Pfam" id="PF23611">
    <property type="entry name" value="zf-C2H2_16"/>
    <property type="match status" value="1"/>
</dbReference>
<dbReference type="SMART" id="SM00355">
    <property type="entry name" value="ZnF_C2H2"/>
    <property type="match status" value="11"/>
</dbReference>
<dbReference type="SUPFAM" id="SSF57667">
    <property type="entry name" value="beta-beta-alpha zinc fingers"/>
    <property type="match status" value="6"/>
</dbReference>
<dbReference type="PROSITE" id="PS00028">
    <property type="entry name" value="ZINC_FINGER_C2H2_1"/>
    <property type="match status" value="7"/>
</dbReference>
<dbReference type="PROSITE" id="PS50157">
    <property type="entry name" value="ZINC_FINGER_C2H2_2"/>
    <property type="match status" value="11"/>
</dbReference>
<proteinExistence type="evidence at protein level"/>
<name>CTCFL_MOUSE</name>
<comment type="function">
    <text evidence="4">Testis-specific DNA binding protein responsible for insulator function, nuclear architecture and transcriptional control, which probably acts by recruiting epigenetic chromatin modifiers. Plays a key role in gene imprinting in male germline, by participating in the establishment of differential methylation at the IGF2/H19 imprinted control region (ICR). Directly binds the unmethylated H19 ICR and recruits the PRMT7 methyltransferase, leading to methylate histone H4 'Arg-3' to form H4R3sme2. This probably leads to recruit de novo DNA methyltransferases at these sites. Seems to act as tumor suppressor. In association with DNMT1 and DNMT3B, involved in activation of BAG1 gene expression by binding to its promoter. Required for dimethylation of H3 lysine 4 (H3K4me2) of MYC and BRCA1 promoters.</text>
</comment>
<comment type="subunit">
    <text evidence="1">Interacts with histones, PRMT7 and SETD1A. Interacts (via N-terminus) with BAG6/BAT3 (By similarity).</text>
</comment>
<comment type="interaction">
    <interactant intactId="EBI-11566304">
        <id>A2APF3</id>
    </interactant>
    <interactant intactId="EBI-15606508">
        <id>Q922X9</id>
        <label>Prmt7</label>
    </interactant>
    <organismsDiffer>false</organismsDiffer>
    <experiments>3</experiments>
</comment>
<comment type="subcellular location">
    <subcellularLocation>
        <location evidence="1">Cytoplasm</location>
    </subcellularLocation>
    <subcellularLocation>
        <location evidence="4">Nucleus</location>
    </subcellularLocation>
</comment>
<comment type="alternative products">
    <event type="alternative splicing"/>
    <isoform>
        <id>A2APF3-1</id>
        <name>1</name>
        <sequence type="displayed"/>
    </isoform>
    <isoform>
        <id>A2APF3-2</id>
        <name>2</name>
        <sequence type="described" ref="VSP_037281"/>
    </isoform>
</comment>
<comment type="tissue specificity">
    <text evidence="4">Testis-specific.</text>
</comment>
<comment type="developmental stage">
    <text evidence="4">Not detected at 13.5 dpc. Detected in mitotically arrested gonocytes of 14.5 dpc embryos. From 17.5 dpc to newborn, it is expressed in some centrally located gonocytes and cells present at the periphery of the developing seminiferous tubules. Present in nuclei of spermatogonia from 15 days after birth to adulthood.</text>
</comment>
<comment type="similarity">
    <text evidence="6">Belongs to the CTCF zinc-finger protein family.</text>
</comment>
<protein>
    <recommendedName>
        <fullName>Transcriptional repressor CTCFL</fullName>
    </recommendedName>
    <alternativeName>
        <fullName>Brother of the regulator of imprinted sites</fullName>
    </alternativeName>
    <alternativeName>
        <fullName>CCCTC-binding factor</fullName>
    </alternativeName>
    <alternativeName>
        <fullName>CTCF paralog</fullName>
    </alternativeName>
    <alternativeName>
        <fullName>CTCF-like protein</fullName>
    </alternativeName>
</protein>
<gene>
    <name type="primary">Ctcfl</name>
    <name type="synonym">Boris</name>
</gene>
<evidence type="ECO:0000250" key="1"/>
<evidence type="ECO:0000255" key="2">
    <source>
        <dbReference type="PROSITE-ProRule" id="PRU00042"/>
    </source>
</evidence>
<evidence type="ECO:0000256" key="3">
    <source>
        <dbReference type="SAM" id="MobiDB-lite"/>
    </source>
</evidence>
<evidence type="ECO:0000269" key="4">
    <source>
    </source>
</evidence>
<evidence type="ECO:0000303" key="5">
    <source>
    </source>
</evidence>
<evidence type="ECO:0000305" key="6"/>
<keyword id="KW-0025">Alternative splicing</keyword>
<keyword id="KW-0156">Chromatin regulator</keyword>
<keyword id="KW-0963">Cytoplasm</keyword>
<keyword id="KW-0238">DNA-binding</keyword>
<keyword id="KW-0479">Metal-binding</keyword>
<keyword id="KW-0539">Nucleus</keyword>
<keyword id="KW-1185">Reference proteome</keyword>
<keyword id="KW-0677">Repeat</keyword>
<keyword id="KW-0678">Repressor</keyword>
<keyword id="KW-0804">Transcription</keyword>
<keyword id="KW-0805">Transcription regulation</keyword>
<keyword id="KW-0043">Tumor suppressor</keyword>
<keyword id="KW-0862">Zinc</keyword>
<keyword id="KW-0863">Zinc-finger</keyword>
<organism>
    <name type="scientific">Mus musculus</name>
    <name type="common">Mouse</name>
    <dbReference type="NCBI Taxonomy" id="10090"/>
    <lineage>
        <taxon>Eukaryota</taxon>
        <taxon>Metazoa</taxon>
        <taxon>Chordata</taxon>
        <taxon>Craniata</taxon>
        <taxon>Vertebrata</taxon>
        <taxon>Euteleostomi</taxon>
        <taxon>Mammalia</taxon>
        <taxon>Eutheria</taxon>
        <taxon>Euarchontoglires</taxon>
        <taxon>Glires</taxon>
        <taxon>Rodentia</taxon>
        <taxon>Myomorpha</taxon>
        <taxon>Muroidea</taxon>
        <taxon>Muridae</taxon>
        <taxon>Murinae</taxon>
        <taxon>Mus</taxon>
        <taxon>Mus</taxon>
    </lineage>
</organism>
<accession>A2APF3</accession>
<accession>B9EKP6</accession>
<accession>Q3Y6S0</accession>
<feature type="chain" id="PRO_0000373924" description="Transcriptional repressor CTCFL">
    <location>
        <begin position="1"/>
        <end position="636"/>
    </location>
</feature>
<feature type="zinc finger region" description="C2H2-type 1" evidence="2">
    <location>
        <begin position="257"/>
        <end position="279"/>
    </location>
</feature>
<feature type="zinc finger region" description="C2H2-type 2" evidence="2">
    <location>
        <begin position="285"/>
        <end position="307"/>
    </location>
</feature>
<feature type="zinc finger region" description="C2H2-type 3" evidence="2">
    <location>
        <begin position="313"/>
        <end position="336"/>
    </location>
</feature>
<feature type="zinc finger region" description="C2H2-type 4" evidence="2">
    <location>
        <begin position="342"/>
        <end position="364"/>
    </location>
</feature>
<feature type="zinc finger region" description="C2H2-type 5" evidence="2">
    <location>
        <begin position="370"/>
        <end position="392"/>
    </location>
</feature>
<feature type="zinc finger region" description="C2H2-type 6" evidence="2">
    <location>
        <begin position="398"/>
        <end position="421"/>
    </location>
</feature>
<feature type="zinc finger region" description="C2H2-type 7" evidence="2">
    <location>
        <begin position="428"/>
        <end position="451"/>
    </location>
</feature>
<feature type="zinc finger region" description="C2H2-type 8" evidence="2">
    <location>
        <begin position="458"/>
        <end position="480"/>
    </location>
</feature>
<feature type="zinc finger region" description="C2H2-type 9" evidence="2">
    <location>
        <begin position="486"/>
        <end position="508"/>
    </location>
</feature>
<feature type="zinc finger region" description="C2H2-type 10" evidence="2">
    <location>
        <begin position="514"/>
        <end position="537"/>
    </location>
</feature>
<feature type="zinc finger region" description="C2H2-type 11" evidence="2">
    <location>
        <begin position="546"/>
        <end position="572"/>
    </location>
</feature>
<feature type="region of interest" description="Disordered" evidence="3">
    <location>
        <begin position="17"/>
        <end position="38"/>
    </location>
</feature>
<feature type="region of interest" description="Disordered" evidence="3">
    <location>
        <begin position="160"/>
        <end position="195"/>
    </location>
</feature>
<feature type="region of interest" description="Disordered" evidence="3">
    <location>
        <begin position="222"/>
        <end position="257"/>
    </location>
</feature>
<feature type="region of interest" description="Disordered" evidence="3">
    <location>
        <begin position="562"/>
        <end position="624"/>
    </location>
</feature>
<feature type="compositionally biased region" description="Acidic residues" evidence="3">
    <location>
        <begin position="160"/>
        <end position="170"/>
    </location>
</feature>
<feature type="compositionally biased region" description="Basic residues" evidence="3">
    <location>
        <begin position="242"/>
        <end position="251"/>
    </location>
</feature>
<feature type="compositionally biased region" description="Basic and acidic residues" evidence="3">
    <location>
        <begin position="568"/>
        <end position="583"/>
    </location>
</feature>
<feature type="splice variant" id="VSP_037281" description="In isoform 2." evidence="5">
    <original>E</original>
    <variation>EDVATQESATS</variation>
    <location>
        <position position="598"/>
    </location>
</feature>
<feature type="sequence conflict" description="In Ref. 1; AAZ79234 and 3; AAI51027." evidence="6" ref="1 3">
    <original>I</original>
    <variation>M</variation>
    <location>
        <position position="629"/>
    </location>
</feature>
<sequence length="636" mass="73108">MAAAEVPVPSGYFTQIKEQKLKPGDLEEEKEEDGVQRVEAQEGVVKEVEAENSCLLLEARAPVESDRRILTLQTVHLESQDVHLQGLGWLSVPHSEELSGTVPEAEGILQLPSVLWLDPEPQLSLQHCVTVSIPEELYPPEELQRIHFHLLRENVLMAEENPELTPDLDESTALKKPEEDEKDQLPPQGETDKREERLLLLEMKPKEGKDDEIVLTISHLSLEEQQDPPAANQTSVPGAKAAKPKRRRQTKGKPQSFQCDTCPFTSSKLSTFNRHIKIHSNERPHLCHLCLKAFRTVTLLRNHVNTHTGTRPHKCRDCDMAFVTSGELVRHRRYKHTYEKPFKCSLCKYASVEASKMKRHIRSHTGERPFQCCQCAYASRDSYKLKRHMRTHSGEKPYECPTCHVRFTQSGTMKIHIAQKHGENVPKYECPHCATIIARKSDLRVHLRNLHSQSPEEMKCRYCPAGFHERYALIQHQRTHKNEKKFKCKQCDYACKQERCLKAHMRMHTGEKPFSCLACNKHFRQKQLLTVHLRKYHDPNFVPNLHLCLKCDKRFSRWSNLQRHRKKCDPEHETLAPNKDRRPVTRTQASEGEAGHKEGEPQCPGEQALGHQGEAAGSQSPDHGLTCEIIFNMMDK</sequence>